<sequence length="14" mass="1617">SVDMVMKGIKLWPL</sequence>
<organism>
    <name type="scientific">Polybia paulista</name>
    <name type="common">Neotropical social wasp</name>
    <name type="synonym">Swarm-founding polistine wasp</name>
    <dbReference type="NCBI Taxonomy" id="291283"/>
    <lineage>
        <taxon>Eukaryota</taxon>
        <taxon>Metazoa</taxon>
        <taxon>Ecdysozoa</taxon>
        <taxon>Arthropoda</taxon>
        <taxon>Hexapoda</taxon>
        <taxon>Insecta</taxon>
        <taxon>Pterygota</taxon>
        <taxon>Neoptera</taxon>
        <taxon>Endopterygota</taxon>
        <taxon>Hymenoptera</taxon>
        <taxon>Apocrita</taxon>
        <taxon>Aculeata</taxon>
        <taxon>Vespoidea</taxon>
        <taxon>Vespidae</taxon>
        <taxon>Polistinae</taxon>
        <taxon>Epiponini</taxon>
        <taxon>Polybia</taxon>
    </lineage>
</organism>
<feature type="peptide" id="PRO_0000044535" description="Polybine-2" evidence="1">
    <location>
        <begin position="1"/>
        <end position="14"/>
    </location>
</feature>
<feature type="modified residue" description="N-acetylserine" evidence="1">
    <location>
        <position position="1"/>
    </location>
</feature>
<accession>P84389</accession>
<protein>
    <recommendedName>
        <fullName evidence="3">Polybine-2</fullName>
    </recommendedName>
    <alternativeName>
        <fullName evidence="2">Polybine-II</fullName>
    </alternativeName>
</protein>
<evidence type="ECO:0000269" key="1">
    <source>
    </source>
</evidence>
<evidence type="ECO:0000303" key="2">
    <source>
    </source>
</evidence>
<evidence type="ECO:0000305" key="3"/>
<comment type="function">
    <text evidence="1">Venom component which lacks hemolytic or antibiotic properties, but produces an inflammatory response via mast cell degranulation and produces a chemotactic effect on leukocytes.</text>
</comment>
<comment type="subcellular location">
    <subcellularLocation>
        <location evidence="1">Secreted</location>
    </subcellularLocation>
</comment>
<comment type="tissue specificity">
    <text evidence="1">Expressed by the venom gland.</text>
</comment>
<comment type="mass spectrometry" mass="1657.12" error="0.29" method="Electrospray" evidence="1">
    <text>Acetylated and with addition of a proton.</text>
</comment>
<dbReference type="iPTMnet" id="P84389"/>
<dbReference type="GO" id="GO:0005576">
    <property type="term" value="C:extracellular region"/>
    <property type="evidence" value="ECO:0000314"/>
    <property type="project" value="UniProtKB"/>
</dbReference>
<dbReference type="GO" id="GO:0090729">
    <property type="term" value="F:toxin activity"/>
    <property type="evidence" value="ECO:0007669"/>
    <property type="project" value="UniProtKB-KW"/>
</dbReference>
<dbReference type="GO" id="GO:0006935">
    <property type="term" value="P:chemotaxis"/>
    <property type="evidence" value="ECO:0000314"/>
    <property type="project" value="UniProtKB"/>
</dbReference>
<dbReference type="GO" id="GO:0043306">
    <property type="term" value="P:positive regulation of mast cell degranulation"/>
    <property type="evidence" value="ECO:0000314"/>
    <property type="project" value="UniProtKB"/>
</dbReference>
<reference key="1">
    <citation type="journal article" date="2004" name="Peptides">
        <title>Structural and functional characterization of N-terminally blocked peptides isolated from the venom of the social wasp Polybia paulista.</title>
        <authorList>
            <person name="Ribeiro S.P."/>
            <person name="Mendes M.A."/>
            <person name="Santos L.D."/>
            <person name="Souza B.M."/>
            <person name="Marques M.R."/>
            <person name="Azevedo W.F. Jr."/>
            <person name="Palma M.S."/>
        </authorList>
    </citation>
    <scope>PROTEIN SEQUENCE</scope>
    <scope>FUNCTION</scope>
    <scope>SUBCELLULAR LOCATION</scope>
    <scope>TISSUE SPECIFICITY</scope>
    <scope>ACETYLATION AT SER-1</scope>
    <scope>MASS SPECTROMETRY</scope>
    <source>
        <tissue>Venom gland</tissue>
    </source>
</reference>
<name>PLYB2_POLPI</name>
<proteinExistence type="evidence at protein level"/>
<keyword id="KW-0007">Acetylation</keyword>
<keyword id="KW-0145">Chemotaxis</keyword>
<keyword id="KW-0903">Direct protein sequencing</keyword>
<keyword id="KW-0467">Mast cell degranulation</keyword>
<keyword id="KW-0964">Secreted</keyword>
<keyword id="KW-0800">Toxin</keyword>